<proteinExistence type="inferred from homology"/>
<evidence type="ECO:0000255" key="1">
    <source>
        <dbReference type="HAMAP-Rule" id="MF_04078"/>
    </source>
</evidence>
<protein>
    <recommendedName>
        <fullName evidence="1">Protein Nef</fullName>
    </recommendedName>
    <alternativeName>
        <fullName evidence="1">3'ORF</fullName>
    </alternativeName>
    <alternativeName>
        <fullName evidence="1">Negative factor</fullName>
        <shortName evidence="1">F-protein</shortName>
    </alternativeName>
    <component>
        <recommendedName>
            <fullName evidence="1">C-terminal core protein</fullName>
        </recommendedName>
    </component>
</protein>
<gene>
    <name evidence="1" type="primary">nef</name>
</gene>
<comment type="function">
    <text evidence="1">Factor of infectivity and pathogenicity, required for optimal virus replication. Alters numerous pathways of T-lymphocyte function and down-regulates immunity surface molecules in order to evade host defense and increase viral infectivity. Alters the functionality of other immunity cells, like dendritic cells, monocytes/macrophages and NK cells.</text>
</comment>
<comment type="function">
    <text evidence="1">In infected CD4(+) T-lymphocytes, down-regulates the surface MHC-I, mature MHC-II, CD4, CD28, CCR5 and CXCR4 molecules. Mediates internalization and degradation of host CD4 through the interaction of with the cytoplasmic tail of CD4, the recruitment of AP-2 (clathrin adapter protein complex 2), internalization through clathrin coated pits, and subsequent transport to endosomes and lysosomes for degradation. Diverts host MHC-I molecules to the trans-Golgi network-associated endosomal compartments by an endocytic pathway to finally target them for degradation. MHC-I down-regulation may involve AP-1 (clathrin adapter protein complex 1) or possibly Src family kinase-ZAP70/Syk-PI3K cascade recruited by PACS2. In consequence infected cells are masked for immune recognition by cytotoxic T-lymphocytes. Decreasing the number of immune receptors also prevents reinfection by more HIV particles (superinfection). Down-regulates host SERINC3 and SERINC5 thereby excluding these proteins from the viral particles. Virion infectivity is drastically higher when SERINC3 or SERINC5 are excluded from the viral envelope, because these host antiviral proteins impair the membrane fusion event necessary for subsequent virion penetration.</text>
</comment>
<comment type="function">
    <text evidence="1">Bypasses host T-cell signaling by inducing a transcriptional program nearly identical to that of anti-CD3 cell activation. Interaction with TCR-zeta chain up-regulates the Fas ligand (FasL). Increasing surface FasL molecules and decreasing surface MHC-I molecules on infected CD4(+) cells send attacking cytotoxic CD8+ T-lymphocytes into apoptosis.</text>
</comment>
<comment type="function">
    <text evidence="1">Plays a role in optimizing the host cell environment for viral replication without causing cell death by apoptosis. Protects the infected cells from apoptosis in order to keep them alive until the next virus generation is ready to strike. Inhibits the Fas and TNFR-mediated death signals by blocking MAP3K5/ASK1. Decreases the half-life of TP53, protecting the infected cell against p53-mediated apoptosis. Inhibits the apoptotic signals regulated by the Bcl-2 family proteins through the formation of a Nef/PI3-kinase/PAK2 complex that leads to activation of PAK2 and induces phosphorylation of host BAD.</text>
</comment>
<comment type="function">
    <text evidence="1">Extracellular Nef protein targets CD4(+) T-lymphocytes for apoptosis by interacting with CXCR4 surface receptors.</text>
</comment>
<comment type="subunit">
    <text evidence="1">Monomer; cytosolic form. Homodimer; membrane bound form. Interacts with Nef associated p21-activated kinase (PAK2); this interaction activates PAK2. Associates with the Nef-MHC-I-AP1 complex; this complex is required for MHC-I internalization. Interacts (via C-terminus) with host PI3-kinase. Interacts with host PACS1; this interaction seems to be weak. Interacts with host PACS2. Interacts with host LCK and MAPK3; these interactions inhibit the kinase activity of the latter. Interacts with host ATP6V1H; this interaction may play a role in CD4 endocytosis. Associates with the CD4-Nef-AP2 complex; this complex is required for CD4 internalization. Interacts with host AP2 subunit alpha and AP2 subunit sigma2. Interacts with TCR-zeta chain; this interaction up-regulates the Fas ligand (FasL) surface expression. Interacts with host HCK, LYN, and SRC; these interactions activate the Src family kinases. Interacts with MAP3K5; this interaction inhibits the Fas and TNFR-mediated death signals. Interacts with beta-COP and PTE1. Interacts with human RACK1; this increases Nef phosphorylation by PKC. Interacts with TP53; this interaction decreases the half-life of TP53, protecting the infected cell against p53-mediated apoptosis.</text>
</comment>
<comment type="subcellular location">
    <subcellularLocation>
        <location evidence="1">Host cell membrane</location>
        <topology evidence="1">Lipid-anchor</topology>
        <orientation evidence="1">Cytoplasmic side</orientation>
    </subcellularLocation>
    <subcellularLocation>
        <location evidence="1">Virion</location>
    </subcellularLocation>
    <subcellularLocation>
        <location evidence="1">Secreted</location>
    </subcellularLocation>
    <subcellularLocation>
        <location evidence="1">Host Golgi apparatus membrane</location>
    </subcellularLocation>
    <text evidence="1">TGN localization requires PACS1. Associates with the inner plasma membrane through its N-terminal domain. Nef stimulates its own export via the release of exosomes. Incorporated in virions at a rate of about 10 molecules per virion, where it is cleaved.</text>
</comment>
<comment type="induction">
    <text evidence="1">Expressed early in the viral replication cycle.</text>
</comment>
<comment type="domain">
    <text evidence="1">The N-terminal domain is composed of the N-myristoyl glycine and of a cluster of positively charged amino acids. It is required for inner plasma membrane targeting of Nef and virion incorporation, and thereby for infectivity. This domain is also involved in binding to TP53.</text>
</comment>
<comment type="domain">
    <text evidence="1">The SH3-binding domain constituted of PxxP motifs mediates binding to several Src family proteins thereby regulating their tyrosine kinase activity. The same motifs also mediates the association with MAPK3, PI3-kinase and TCR-zeta.</text>
</comment>
<comment type="domain">
    <text evidence="1">The dileucine internalization motif and a diacidic motif seem to be required for binding to AP-2.</text>
</comment>
<comment type="domain">
    <text evidence="1">The acidic region binds to the sorting protein PACS-2, which targets Nef to the paranuclear region, enabling the PxxP motif to direct assembly of an SFK/ZAP-70/PI3K complex that accelerates endocytosis of cell-surface MHC-I.</text>
</comment>
<comment type="PTM">
    <text evidence="1">The virion-associated Nef proteins are cleaved by the viral protease to release the soluble C-terminal core protein. Nef is probably cleaved concomitantly with viral structural proteins on maturation of virus particles.</text>
</comment>
<comment type="PTM">
    <text evidence="1">Myristoylated.</text>
</comment>
<comment type="PTM">
    <text evidence="1">Phosphorylated on serine residues, probably by host PKCdelta and theta.</text>
</comment>
<comment type="miscellaneous">
    <text evidence="1">HIV-1 lineages are divided in three main groups, M (for Major), O (for Outlier), and N (for New, or Non-M, Non-O). The vast majority of strains found worldwide belong to the group M. Group O seems to be endemic to and largely confined to Cameroon and neighboring countries in West Central Africa, where these viruses represent a small minority of HIV-1 strains. The group N is represented by a limited number of isolates from Cameroonian persons. The group M is further subdivided in 9 clades or subtypes (A to D, F to H, J and K).</text>
</comment>
<comment type="similarity">
    <text evidence="1">Belongs to the lentivirus primate group Nef protein family.</text>
</comment>
<name>NEF_HV1ET</name>
<accession>Q75009</accession>
<dbReference type="EMBL" id="U46016">
    <property type="protein sequence ID" value="AAB36508.1"/>
    <property type="molecule type" value="Genomic_DNA"/>
</dbReference>
<dbReference type="SMR" id="Q75009"/>
<dbReference type="Proteomes" id="UP000007694">
    <property type="component" value="Segment"/>
</dbReference>
<dbReference type="GO" id="GO:0005576">
    <property type="term" value="C:extracellular region"/>
    <property type="evidence" value="ECO:0007669"/>
    <property type="project" value="UniProtKB-SubCell"/>
</dbReference>
<dbReference type="GO" id="GO:0044178">
    <property type="term" value="C:host cell Golgi membrane"/>
    <property type="evidence" value="ECO:0007669"/>
    <property type="project" value="UniProtKB-SubCell"/>
</dbReference>
<dbReference type="GO" id="GO:0020002">
    <property type="term" value="C:host cell plasma membrane"/>
    <property type="evidence" value="ECO:0007669"/>
    <property type="project" value="UniProtKB-SubCell"/>
</dbReference>
<dbReference type="GO" id="GO:0016020">
    <property type="term" value="C:membrane"/>
    <property type="evidence" value="ECO:0007669"/>
    <property type="project" value="UniProtKB-UniRule"/>
</dbReference>
<dbReference type="GO" id="GO:0044423">
    <property type="term" value="C:virion component"/>
    <property type="evidence" value="ECO:0007669"/>
    <property type="project" value="UniProtKB-UniRule"/>
</dbReference>
<dbReference type="GO" id="GO:0005525">
    <property type="term" value="F:GTP binding"/>
    <property type="evidence" value="ECO:0007669"/>
    <property type="project" value="UniProtKB-UniRule"/>
</dbReference>
<dbReference type="GO" id="GO:0017124">
    <property type="term" value="F:SH3 domain binding"/>
    <property type="evidence" value="ECO:0007669"/>
    <property type="project" value="UniProtKB-UniRule"/>
</dbReference>
<dbReference type="GO" id="GO:0046776">
    <property type="term" value="P:symbiont-mediated suppression of host antigen processing and presentation of peptide antigen via MHC class I"/>
    <property type="evidence" value="ECO:0007669"/>
    <property type="project" value="UniProtKB-UniRule"/>
</dbReference>
<dbReference type="GO" id="GO:0039505">
    <property type="term" value="P:symbiont-mediated suppression of host antigen processing and presentation of peptide antigen via MHC class II"/>
    <property type="evidence" value="ECO:0007669"/>
    <property type="project" value="UniProtKB-UniRule"/>
</dbReference>
<dbReference type="GO" id="GO:0140321">
    <property type="term" value="P:symbiont-mediated suppression of host autophagy"/>
    <property type="evidence" value="ECO:0007669"/>
    <property type="project" value="UniProtKB-KW"/>
</dbReference>
<dbReference type="Gene3D" id="4.10.890.10">
    <property type="entry name" value="HIV 1 nef anchor domain"/>
    <property type="match status" value="1"/>
</dbReference>
<dbReference type="Gene3D" id="3.30.62.10">
    <property type="entry name" value="Nef Regulatory Factor"/>
    <property type="match status" value="1"/>
</dbReference>
<dbReference type="HAMAP" id="MF_04078">
    <property type="entry name" value="NEF_HIV"/>
    <property type="match status" value="1"/>
</dbReference>
<dbReference type="InterPro" id="IPR027480">
    <property type="entry name" value="HIV-1_Nef_anchor_sf"/>
</dbReference>
<dbReference type="InterPro" id="IPR027481">
    <property type="entry name" value="HIV-1_Nef_core_sf"/>
</dbReference>
<dbReference type="InterPro" id="IPR001558">
    <property type="entry name" value="HIV_Nef"/>
</dbReference>
<dbReference type="Pfam" id="PF00469">
    <property type="entry name" value="F-protein"/>
    <property type="match status" value="1"/>
</dbReference>
<dbReference type="SUPFAM" id="SSF55671">
    <property type="entry name" value="Regulatory factor Nef"/>
    <property type="match status" value="1"/>
</dbReference>
<organismHost>
    <name type="scientific">Homo sapiens</name>
    <name type="common">Human</name>
    <dbReference type="NCBI Taxonomy" id="9606"/>
</organismHost>
<organism>
    <name type="scientific">Human immunodeficiency virus type 1 group M subtype C (isolate ETH2220)</name>
    <name type="common">HIV-1</name>
    <dbReference type="NCBI Taxonomy" id="388796"/>
    <lineage>
        <taxon>Viruses</taxon>
        <taxon>Riboviria</taxon>
        <taxon>Pararnavirae</taxon>
        <taxon>Artverviricota</taxon>
        <taxon>Revtraviricetes</taxon>
        <taxon>Ortervirales</taxon>
        <taxon>Retroviridae</taxon>
        <taxon>Orthoretrovirinae</taxon>
        <taxon>Lentivirus</taxon>
        <taxon>Human immunodeficiency virus type 1</taxon>
    </lineage>
</organism>
<reference key="1">
    <citation type="journal article" date="1996" name="AIDS Res. Hum. Retroviruses">
        <title>Full-length sequence of an ethiopian human immunodeficiency virus type 1 (HIV-1) isolate of genetic subtype C.</title>
        <authorList>
            <person name="Salminen M.O."/>
            <person name="Johansson B."/>
            <person name="Sonnerborg A."/>
            <person name="Ayehunie S."/>
            <person name="Gotte D."/>
            <person name="Leinikki P."/>
            <person name="Burke D.S."/>
            <person name="McCutchan F.E."/>
        </authorList>
    </citation>
    <scope>NUCLEOTIDE SEQUENCE [GENOMIC DNA]</scope>
</reference>
<keyword id="KW-0014">AIDS</keyword>
<keyword id="KW-0053">Apoptosis</keyword>
<keyword id="KW-0244">Early protein</keyword>
<keyword id="KW-1032">Host cell membrane</keyword>
<keyword id="KW-1040">Host Golgi apparatus</keyword>
<keyword id="KW-1043">Host membrane</keyword>
<keyword id="KW-0945">Host-virus interaction</keyword>
<keyword id="KW-1080">Inhibition of host adaptive immune response by virus</keyword>
<keyword id="KW-1083">Inhibition of host autophagy by virus</keyword>
<keyword id="KW-1115">Inhibition of host MHC class I molecule presentation by virus</keyword>
<keyword id="KW-1116">Inhibition of host MHC class II molecule presentation by virus</keyword>
<keyword id="KW-0449">Lipoprotein</keyword>
<keyword id="KW-0472">Membrane</keyword>
<keyword id="KW-0519">Myristate</keyword>
<keyword id="KW-0597">Phosphoprotein</keyword>
<keyword id="KW-1185">Reference proteome</keyword>
<keyword id="KW-0964">Secreted</keyword>
<keyword id="KW-0729">SH3-binding</keyword>
<keyword id="KW-0899">Viral immunoevasion</keyword>
<keyword id="KW-0946">Virion</keyword>
<keyword id="KW-0843">Virulence</keyword>
<feature type="initiator methionine" description="Removed; by host" evidence="1">
    <location>
        <position position="1"/>
    </location>
</feature>
<feature type="chain" id="PRO_0000244796" description="Protein Nef" evidence="1">
    <location>
        <begin position="2"/>
        <end position="207"/>
    </location>
</feature>
<feature type="chain" id="PRO_0000244797" description="C-terminal core protein" evidence="1">
    <location>
        <begin position="58"/>
        <end position="207"/>
    </location>
</feature>
<feature type="region of interest" description="Acidic; interacts with host PACS1 and PACS2; stabilizes the interaction of NEF/MHC-I with host AP1M1; necessary for MHC-I internalization" evidence="1">
    <location>
        <begin position="62"/>
        <end position="66"/>
    </location>
</feature>
<feature type="region of interest" description="SH3-binding; interaction with Src family tyrosine kinases" evidence="1">
    <location>
        <begin position="70"/>
        <end position="79"/>
    </location>
</feature>
<feature type="region of interest" description="Mediates dimerization, Nef-PTE1 interaction" evidence="1">
    <location>
        <begin position="109"/>
        <end position="125"/>
    </location>
</feature>
<feature type="region of interest" description="Binding to ATP6V1H" evidence="1">
    <location>
        <begin position="149"/>
        <end position="181"/>
    </location>
</feature>
<feature type="short sequence motif" description="PxxP; stabilizes the interaction of NEF/MHC-I with host AP1M1; necessary for MHC-I internalization" evidence="1">
    <location>
        <begin position="73"/>
        <end position="76"/>
    </location>
</feature>
<feature type="short sequence motif" description="Dileucine internalization motif; necessary for CD4 internalization" evidence="1">
    <location>
        <begin position="165"/>
        <end position="166"/>
    </location>
</feature>
<feature type="short sequence motif" description="Diacidic; necessary for CD4 internalization" evidence="1">
    <location>
        <begin position="175"/>
        <end position="176"/>
    </location>
</feature>
<feature type="site" description="Cleavage; by viral protease" evidence="1">
    <location>
        <begin position="57"/>
        <end position="58"/>
    </location>
</feature>
<feature type="modified residue" description="Phosphoserine; by host" evidence="1">
    <location>
        <position position="6"/>
    </location>
</feature>
<feature type="lipid moiety-binding region" description="N-myristoyl glycine; by host" evidence="1">
    <location>
        <position position="2"/>
    </location>
</feature>
<sequence length="207" mass="23533">MGGTMSKCSPVGWPAIRERIRRAAPAAEGVGAASRDLDKYGALTSSNTPANNPDCAWLEAQEEEEEVGFPVRPQVPLRPMTYKAAFDLSLFLKEKGGLEGLIYSKKRQEILDLWVYNTQGFFPDWQNYTPGPGVRYPLTFGWCFKLVPVDPSEVEEINEGENNCLLHPASLHGMEDEDREVLKWKFDSHLARRHMARELHPEYYKDC</sequence>